<dbReference type="EMBL" id="X65615">
    <property type="protein sequence ID" value="CAA46568.1"/>
    <property type="molecule type" value="Genomic_DNA"/>
</dbReference>
<dbReference type="RefSeq" id="YP_009730707.1">
    <property type="nucleotide sequence ID" value="NC_045948.1"/>
</dbReference>
<dbReference type="RefSeq" id="YP_009730728.1">
    <property type="nucleotide sequence ID" value="NC_045948.1"/>
</dbReference>
<dbReference type="SMR" id="P27107"/>
<dbReference type="GeneID" id="43960656"/>
<dbReference type="GeneID" id="43960700"/>
<dbReference type="GO" id="GO:0009507">
    <property type="term" value="C:chloroplast"/>
    <property type="evidence" value="ECO:0007669"/>
    <property type="project" value="UniProtKB-SubCell"/>
</dbReference>
<dbReference type="GO" id="GO:0005762">
    <property type="term" value="C:mitochondrial large ribosomal subunit"/>
    <property type="evidence" value="ECO:0007669"/>
    <property type="project" value="TreeGrafter"/>
</dbReference>
<dbReference type="GO" id="GO:0019843">
    <property type="term" value="F:rRNA binding"/>
    <property type="evidence" value="ECO:0007669"/>
    <property type="project" value="UniProtKB-UniRule"/>
</dbReference>
<dbReference type="GO" id="GO:0003735">
    <property type="term" value="F:structural constituent of ribosome"/>
    <property type="evidence" value="ECO:0007669"/>
    <property type="project" value="InterPro"/>
</dbReference>
<dbReference type="GO" id="GO:0016740">
    <property type="term" value="F:transferase activity"/>
    <property type="evidence" value="ECO:0007669"/>
    <property type="project" value="InterPro"/>
</dbReference>
<dbReference type="GO" id="GO:0032543">
    <property type="term" value="P:mitochondrial translation"/>
    <property type="evidence" value="ECO:0007669"/>
    <property type="project" value="TreeGrafter"/>
</dbReference>
<dbReference type="FunFam" id="4.10.950.10:FF:000001">
    <property type="entry name" value="50S ribosomal protein L2"/>
    <property type="match status" value="1"/>
</dbReference>
<dbReference type="FunFam" id="2.30.30.30:FF:000008">
    <property type="entry name" value="50S ribosomal protein L2, chloroplastic"/>
    <property type="match status" value="1"/>
</dbReference>
<dbReference type="FunFam" id="2.40.50.140:FF:000029">
    <property type="entry name" value="50S ribosomal protein L2, chloroplastic"/>
    <property type="match status" value="1"/>
</dbReference>
<dbReference type="Gene3D" id="2.30.30.30">
    <property type="match status" value="1"/>
</dbReference>
<dbReference type="Gene3D" id="2.40.50.140">
    <property type="entry name" value="Nucleic acid-binding proteins"/>
    <property type="match status" value="1"/>
</dbReference>
<dbReference type="Gene3D" id="4.10.950.10">
    <property type="entry name" value="Ribosomal protein L2, domain 3"/>
    <property type="match status" value="1"/>
</dbReference>
<dbReference type="HAMAP" id="MF_01320_B">
    <property type="entry name" value="Ribosomal_uL2_B"/>
    <property type="match status" value="1"/>
</dbReference>
<dbReference type="InterPro" id="IPR012340">
    <property type="entry name" value="NA-bd_OB-fold"/>
</dbReference>
<dbReference type="InterPro" id="IPR014722">
    <property type="entry name" value="Rib_uL2_dom2"/>
</dbReference>
<dbReference type="InterPro" id="IPR002171">
    <property type="entry name" value="Ribosomal_uL2"/>
</dbReference>
<dbReference type="InterPro" id="IPR005880">
    <property type="entry name" value="Ribosomal_uL2_bac/org-type"/>
</dbReference>
<dbReference type="InterPro" id="IPR022669">
    <property type="entry name" value="Ribosomal_uL2_C"/>
</dbReference>
<dbReference type="InterPro" id="IPR022671">
    <property type="entry name" value="Ribosomal_uL2_CS"/>
</dbReference>
<dbReference type="InterPro" id="IPR014726">
    <property type="entry name" value="Ribosomal_uL2_dom3"/>
</dbReference>
<dbReference type="InterPro" id="IPR022666">
    <property type="entry name" value="Ribosomal_uL2_RNA-bd_dom"/>
</dbReference>
<dbReference type="InterPro" id="IPR008991">
    <property type="entry name" value="Translation_prot_SH3-like_sf"/>
</dbReference>
<dbReference type="NCBIfam" id="TIGR01171">
    <property type="entry name" value="rplB_bact"/>
    <property type="match status" value="1"/>
</dbReference>
<dbReference type="PANTHER" id="PTHR13691:SF5">
    <property type="entry name" value="LARGE RIBOSOMAL SUBUNIT PROTEIN UL2M"/>
    <property type="match status" value="1"/>
</dbReference>
<dbReference type="PANTHER" id="PTHR13691">
    <property type="entry name" value="RIBOSOMAL PROTEIN L2"/>
    <property type="match status" value="1"/>
</dbReference>
<dbReference type="Pfam" id="PF00181">
    <property type="entry name" value="Ribosomal_L2"/>
    <property type="match status" value="1"/>
</dbReference>
<dbReference type="Pfam" id="PF03947">
    <property type="entry name" value="Ribosomal_L2_C"/>
    <property type="match status" value="1"/>
</dbReference>
<dbReference type="PIRSF" id="PIRSF002158">
    <property type="entry name" value="Ribosomal_L2"/>
    <property type="match status" value="1"/>
</dbReference>
<dbReference type="SMART" id="SM01383">
    <property type="entry name" value="Ribosomal_L2"/>
    <property type="match status" value="1"/>
</dbReference>
<dbReference type="SMART" id="SM01382">
    <property type="entry name" value="Ribosomal_L2_C"/>
    <property type="match status" value="1"/>
</dbReference>
<dbReference type="SUPFAM" id="SSF50249">
    <property type="entry name" value="Nucleic acid-binding proteins"/>
    <property type="match status" value="1"/>
</dbReference>
<dbReference type="SUPFAM" id="SSF50104">
    <property type="entry name" value="Translation proteins SH3-like domain"/>
    <property type="match status" value="1"/>
</dbReference>
<dbReference type="PROSITE" id="PS00467">
    <property type="entry name" value="RIBOSOMAL_L2"/>
    <property type="match status" value="1"/>
</dbReference>
<name>RK2_SINAL</name>
<protein>
    <recommendedName>
        <fullName evidence="2">Large ribosomal subunit protein uL2c</fullName>
    </recommendedName>
    <alternativeName>
        <fullName evidence="4">50S ribosomal protein L2, chloroplastic</fullName>
    </alternativeName>
</protein>
<gene>
    <name type="primary">rpl2</name>
</gene>
<feature type="chain" id="PRO_0000129704" description="Large ribosomal subunit protein uL2c">
    <location>
        <begin position="1"/>
        <end position="274"/>
    </location>
</feature>
<feature type="region of interest" description="Disordered" evidence="3">
    <location>
        <begin position="1"/>
        <end position="22"/>
    </location>
</feature>
<feature type="region of interest" description="Disordered" evidence="3">
    <location>
        <begin position="225"/>
        <end position="254"/>
    </location>
</feature>
<sequence length="274" mass="29955">MAIHLYKTSTPSTRNGAVDSQVKSNPRNNLIYGQHHCGKGRNARGIITVRHRGGGHKRLYRKIDFRRNTKDIYGRIVTIEYDPNRNAYICLIHYGDGEKRYILHPRGAIIGDTIVSGTEVPIKMGNALPLTDMPLGTAIHNIEITLGKGGQLARAAGAVAKLIAKEGKSATLKLPSGEVRLISKNCSATVGQVGNVGVNQKSLGRAGSKCWLGKRPVVRGVVMNPVDHPHGGGEGRAPIGRKKPVTPWGYPALGRRTRKRKKYSETLILRRRSK</sequence>
<comment type="subunit">
    <text evidence="1">Part of the 50S ribosomal subunit.</text>
</comment>
<comment type="subcellular location">
    <subcellularLocation>
        <location>Plastid</location>
        <location>Chloroplast</location>
    </subcellularLocation>
</comment>
<comment type="similarity">
    <text evidence="4">Belongs to the universal ribosomal protein uL2 family.</text>
</comment>
<evidence type="ECO:0000250" key="1"/>
<evidence type="ECO:0000255" key="2">
    <source>
        <dbReference type="HAMAP-Rule" id="MF_01320"/>
    </source>
</evidence>
<evidence type="ECO:0000256" key="3">
    <source>
        <dbReference type="SAM" id="MobiDB-lite"/>
    </source>
</evidence>
<evidence type="ECO:0000305" key="4"/>
<organism>
    <name type="scientific">Sinapis alba</name>
    <name type="common">White mustard</name>
    <name type="synonym">Brassica hirta</name>
    <dbReference type="NCBI Taxonomy" id="3728"/>
    <lineage>
        <taxon>Eukaryota</taxon>
        <taxon>Viridiplantae</taxon>
        <taxon>Streptophyta</taxon>
        <taxon>Embryophyta</taxon>
        <taxon>Tracheophyta</taxon>
        <taxon>Spermatophyta</taxon>
        <taxon>Magnoliopsida</taxon>
        <taxon>eudicotyledons</taxon>
        <taxon>Gunneridae</taxon>
        <taxon>Pentapetalae</taxon>
        <taxon>rosids</taxon>
        <taxon>malvids</taxon>
        <taxon>Brassicales</taxon>
        <taxon>Brassicaceae</taxon>
        <taxon>Brassiceae</taxon>
        <taxon>Sinapis</taxon>
    </lineage>
</organism>
<geneLocation type="chloroplast"/>
<proteinExistence type="inferred from homology"/>
<reference key="1">
    <citation type="submission" date="1992-04" db="EMBL/GenBank/DDBJ databases">
        <authorList>
            <person name="Nickelsen J."/>
            <person name="Link G."/>
        </authorList>
    </citation>
    <scope>NUCLEOTIDE SEQUENCE [GENOMIC DNA]</scope>
    <source>
        <strain>cv. Albatros</strain>
        <tissue>Cotyledon</tissue>
    </source>
</reference>
<accession>P27107</accession>
<keyword id="KW-0150">Chloroplast</keyword>
<keyword id="KW-0934">Plastid</keyword>
<keyword id="KW-0687">Ribonucleoprotein</keyword>
<keyword id="KW-0689">Ribosomal protein</keyword>